<evidence type="ECO:0000255" key="1">
    <source>
        <dbReference type="HAMAP-Rule" id="MF_01343"/>
    </source>
</evidence>
<evidence type="ECO:0000305" key="2"/>
<protein>
    <recommendedName>
        <fullName evidence="1">Small ribosomal subunit protein uS15</fullName>
    </recommendedName>
    <alternativeName>
        <fullName evidence="2">30S ribosomal protein S15</fullName>
    </alternativeName>
</protein>
<dbReference type="EMBL" id="AM167904">
    <property type="protein sequence ID" value="CAJ50279.1"/>
    <property type="molecule type" value="Genomic_DNA"/>
</dbReference>
<dbReference type="RefSeq" id="WP_012418311.1">
    <property type="nucleotide sequence ID" value="NC_010645.1"/>
</dbReference>
<dbReference type="SMR" id="Q2KWI4"/>
<dbReference type="STRING" id="360910.BAV2668"/>
<dbReference type="GeneID" id="92997197"/>
<dbReference type="KEGG" id="bav:BAV2668"/>
<dbReference type="eggNOG" id="COG0184">
    <property type="taxonomic scope" value="Bacteria"/>
</dbReference>
<dbReference type="HOGENOM" id="CLU_148518_0_0_4"/>
<dbReference type="OrthoDB" id="9799262at2"/>
<dbReference type="Proteomes" id="UP000001977">
    <property type="component" value="Chromosome"/>
</dbReference>
<dbReference type="GO" id="GO:0022627">
    <property type="term" value="C:cytosolic small ribosomal subunit"/>
    <property type="evidence" value="ECO:0007669"/>
    <property type="project" value="TreeGrafter"/>
</dbReference>
<dbReference type="GO" id="GO:0019843">
    <property type="term" value="F:rRNA binding"/>
    <property type="evidence" value="ECO:0007669"/>
    <property type="project" value="UniProtKB-UniRule"/>
</dbReference>
<dbReference type="GO" id="GO:0003735">
    <property type="term" value="F:structural constituent of ribosome"/>
    <property type="evidence" value="ECO:0007669"/>
    <property type="project" value="InterPro"/>
</dbReference>
<dbReference type="GO" id="GO:0006412">
    <property type="term" value="P:translation"/>
    <property type="evidence" value="ECO:0007669"/>
    <property type="project" value="UniProtKB-UniRule"/>
</dbReference>
<dbReference type="CDD" id="cd00353">
    <property type="entry name" value="Ribosomal_S15p_S13e"/>
    <property type="match status" value="1"/>
</dbReference>
<dbReference type="FunFam" id="1.10.287.10:FF:000002">
    <property type="entry name" value="30S ribosomal protein S15"/>
    <property type="match status" value="1"/>
</dbReference>
<dbReference type="Gene3D" id="6.10.250.3130">
    <property type="match status" value="1"/>
</dbReference>
<dbReference type="Gene3D" id="1.10.287.10">
    <property type="entry name" value="S15/NS1, RNA-binding"/>
    <property type="match status" value="1"/>
</dbReference>
<dbReference type="HAMAP" id="MF_01343_B">
    <property type="entry name" value="Ribosomal_uS15_B"/>
    <property type="match status" value="1"/>
</dbReference>
<dbReference type="InterPro" id="IPR000589">
    <property type="entry name" value="Ribosomal_uS15"/>
</dbReference>
<dbReference type="InterPro" id="IPR005290">
    <property type="entry name" value="Ribosomal_uS15_bac-type"/>
</dbReference>
<dbReference type="InterPro" id="IPR009068">
    <property type="entry name" value="uS15_NS1_RNA-bd_sf"/>
</dbReference>
<dbReference type="NCBIfam" id="TIGR00952">
    <property type="entry name" value="S15_bact"/>
    <property type="match status" value="1"/>
</dbReference>
<dbReference type="PANTHER" id="PTHR23321">
    <property type="entry name" value="RIBOSOMAL PROTEIN S15, BACTERIAL AND ORGANELLAR"/>
    <property type="match status" value="1"/>
</dbReference>
<dbReference type="PANTHER" id="PTHR23321:SF26">
    <property type="entry name" value="SMALL RIBOSOMAL SUBUNIT PROTEIN US15M"/>
    <property type="match status" value="1"/>
</dbReference>
<dbReference type="Pfam" id="PF00312">
    <property type="entry name" value="Ribosomal_S15"/>
    <property type="match status" value="1"/>
</dbReference>
<dbReference type="SMART" id="SM01387">
    <property type="entry name" value="Ribosomal_S15"/>
    <property type="match status" value="1"/>
</dbReference>
<dbReference type="SUPFAM" id="SSF47060">
    <property type="entry name" value="S15/NS1 RNA-binding domain"/>
    <property type="match status" value="1"/>
</dbReference>
<dbReference type="PROSITE" id="PS00362">
    <property type="entry name" value="RIBOSOMAL_S15"/>
    <property type="match status" value="1"/>
</dbReference>
<gene>
    <name evidence="1" type="primary">rpsO</name>
    <name type="ordered locus">BAV2668</name>
</gene>
<feature type="chain" id="PRO_0000255479" description="Small ribosomal subunit protein uS15">
    <location>
        <begin position="1"/>
        <end position="89"/>
    </location>
</feature>
<keyword id="KW-1185">Reference proteome</keyword>
<keyword id="KW-0687">Ribonucleoprotein</keyword>
<keyword id="KW-0689">Ribosomal protein</keyword>
<keyword id="KW-0694">RNA-binding</keyword>
<keyword id="KW-0699">rRNA-binding</keyword>
<organism>
    <name type="scientific">Bordetella avium (strain 197N)</name>
    <dbReference type="NCBI Taxonomy" id="360910"/>
    <lineage>
        <taxon>Bacteria</taxon>
        <taxon>Pseudomonadati</taxon>
        <taxon>Pseudomonadota</taxon>
        <taxon>Betaproteobacteria</taxon>
        <taxon>Burkholderiales</taxon>
        <taxon>Alcaligenaceae</taxon>
        <taxon>Bordetella</taxon>
    </lineage>
</organism>
<sequence length="89" mass="10208">MSVADIKKAEIVSQFQRAQGDTGSPEVQVALLTARINELTGHFKEHAKDHHSRRGLLRMVSRRRKLLDYLKGRNPDSYRALIEKLGLRK</sequence>
<proteinExistence type="inferred from homology"/>
<comment type="function">
    <text evidence="1">One of the primary rRNA binding proteins, it binds directly to 16S rRNA where it helps nucleate assembly of the platform of the 30S subunit by binding and bridging several RNA helices of the 16S rRNA.</text>
</comment>
<comment type="function">
    <text evidence="1">Forms an intersubunit bridge (bridge B4) with the 23S rRNA of the 50S subunit in the ribosome.</text>
</comment>
<comment type="subunit">
    <text evidence="1">Part of the 30S ribosomal subunit. Forms a bridge to the 50S subunit in the 70S ribosome, contacting the 23S rRNA.</text>
</comment>
<comment type="similarity">
    <text evidence="1">Belongs to the universal ribosomal protein uS15 family.</text>
</comment>
<reference key="1">
    <citation type="journal article" date="2006" name="J. Bacteriol.">
        <title>Comparison of the genome sequence of the poultry pathogen Bordetella avium with those of B. bronchiseptica, B. pertussis, and B. parapertussis reveals extensive diversity in surface structures associated with host interaction.</title>
        <authorList>
            <person name="Sebaihia M."/>
            <person name="Preston A."/>
            <person name="Maskell D.J."/>
            <person name="Kuzmiak H."/>
            <person name="Connell T.D."/>
            <person name="King N.D."/>
            <person name="Orndorff P.E."/>
            <person name="Miyamoto D.M."/>
            <person name="Thomson N.R."/>
            <person name="Harris D."/>
            <person name="Goble A."/>
            <person name="Lord A."/>
            <person name="Murphy L."/>
            <person name="Quail M.A."/>
            <person name="Rutter S."/>
            <person name="Squares R."/>
            <person name="Squares S."/>
            <person name="Woodward J."/>
            <person name="Parkhill J."/>
            <person name="Temple L.M."/>
        </authorList>
    </citation>
    <scope>NUCLEOTIDE SEQUENCE [LARGE SCALE GENOMIC DNA]</scope>
    <source>
        <strain>197N</strain>
    </source>
</reference>
<name>RS15_BORA1</name>
<accession>Q2KWI4</accession>